<name>SLX9_DICDI</name>
<evidence type="ECO:0000250" key="1"/>
<evidence type="ECO:0000256" key="2">
    <source>
        <dbReference type="SAM" id="MobiDB-lite"/>
    </source>
</evidence>
<evidence type="ECO:0000305" key="3"/>
<organism>
    <name type="scientific">Dictyostelium discoideum</name>
    <name type="common">Social amoeba</name>
    <dbReference type="NCBI Taxonomy" id="44689"/>
    <lineage>
        <taxon>Eukaryota</taxon>
        <taxon>Amoebozoa</taxon>
        <taxon>Evosea</taxon>
        <taxon>Eumycetozoa</taxon>
        <taxon>Dictyostelia</taxon>
        <taxon>Dictyosteliales</taxon>
        <taxon>Dictyosteliaceae</taxon>
        <taxon>Dictyostelium</taxon>
    </lineage>
</organism>
<comment type="function">
    <text evidence="1">Involved in ribosome biogenesis.</text>
</comment>
<comment type="subcellular location">
    <subcellularLocation>
        <location evidence="1">Nucleus</location>
        <location evidence="1">Nucleolus</location>
    </subcellularLocation>
</comment>
<comment type="similarity">
    <text evidence="3">Belongs to the SLX9 family.</text>
</comment>
<gene>
    <name type="ORF">DDB_G0282497</name>
</gene>
<feature type="chain" id="PRO_0000350772" description="Putative ribosome biogenesis protein slx9-like">
    <location>
        <begin position="1"/>
        <end position="215"/>
    </location>
</feature>
<feature type="region of interest" description="Disordered" evidence="2">
    <location>
        <begin position="49"/>
        <end position="121"/>
    </location>
</feature>
<feature type="region of interest" description="Disordered" evidence="2">
    <location>
        <begin position="133"/>
        <end position="157"/>
    </location>
</feature>
<feature type="region of interest" description="Disordered" evidence="2">
    <location>
        <begin position="189"/>
        <end position="215"/>
    </location>
</feature>
<dbReference type="EMBL" id="AAFI02000047">
    <property type="protein sequence ID" value="EAL66108.1"/>
    <property type="molecule type" value="Genomic_DNA"/>
</dbReference>
<dbReference type="RefSeq" id="XP_640084.1">
    <property type="nucleotide sequence ID" value="XM_634992.1"/>
</dbReference>
<dbReference type="SMR" id="Q54SF5"/>
<dbReference type="FunCoup" id="Q54SF5">
    <property type="interactions" value="1"/>
</dbReference>
<dbReference type="STRING" id="44689.Q54SF5"/>
<dbReference type="PaxDb" id="44689-DDB0204796"/>
<dbReference type="EnsemblProtists" id="EAL66108">
    <property type="protein sequence ID" value="EAL66108"/>
    <property type="gene ID" value="DDB_G0282497"/>
</dbReference>
<dbReference type="GeneID" id="8623613"/>
<dbReference type="KEGG" id="ddi:DDB_G0282497"/>
<dbReference type="dictyBase" id="DDB_G0282497"/>
<dbReference type="VEuPathDB" id="AmoebaDB:DDB_G0282497"/>
<dbReference type="eggNOG" id="ENOG502SC3C">
    <property type="taxonomic scope" value="Eukaryota"/>
</dbReference>
<dbReference type="HOGENOM" id="CLU_1285364_0_0_1"/>
<dbReference type="InParanoid" id="Q54SF5"/>
<dbReference type="OMA" id="ESIPERH"/>
<dbReference type="PhylomeDB" id="Q54SF5"/>
<dbReference type="PRO" id="PR:Q54SF5"/>
<dbReference type="Proteomes" id="UP000002195">
    <property type="component" value="Chromosome 3"/>
</dbReference>
<dbReference type="GO" id="GO:0030686">
    <property type="term" value="C:90S preribosome"/>
    <property type="evidence" value="ECO:0007669"/>
    <property type="project" value="InterPro"/>
</dbReference>
<dbReference type="GO" id="GO:0005730">
    <property type="term" value="C:nucleolus"/>
    <property type="evidence" value="ECO:0007669"/>
    <property type="project" value="UniProtKB-SubCell"/>
</dbReference>
<dbReference type="GO" id="GO:0030688">
    <property type="term" value="C:preribosome, small subunit precursor"/>
    <property type="evidence" value="ECO:0007669"/>
    <property type="project" value="InterPro"/>
</dbReference>
<dbReference type="GO" id="GO:0000462">
    <property type="term" value="P:maturation of SSU-rRNA from tricistronic rRNA transcript (SSU-rRNA, 5.8S rRNA, LSU-rRNA)"/>
    <property type="evidence" value="ECO:0007669"/>
    <property type="project" value="InterPro"/>
</dbReference>
<dbReference type="InterPro" id="IPR028160">
    <property type="entry name" value="Slx9-like"/>
</dbReference>
<dbReference type="PANTHER" id="PTHR31109">
    <property type="entry name" value="PROTEIN FAM207A"/>
    <property type="match status" value="1"/>
</dbReference>
<dbReference type="PANTHER" id="PTHR31109:SF2">
    <property type="entry name" value="RIBOSOME BIOGENESIS PROTEIN SLX9 HOMOLOG"/>
    <property type="match status" value="1"/>
</dbReference>
<dbReference type="Pfam" id="PF15341">
    <property type="entry name" value="SLX9"/>
    <property type="match status" value="1"/>
</dbReference>
<protein>
    <recommendedName>
        <fullName>Putative ribosome biogenesis protein slx9-like</fullName>
    </recommendedName>
</protein>
<proteinExistence type="inferred from homology"/>
<accession>Q54SF5</accession>
<sequence length="215" mass="24791">MPKETKETKKYKVEDEFAKAEKTSFVHIPSIKLDTSTLANNFKSLNKNIIPSGKLDYDNDNNENNNNNNENKHIDKRPQLISKKDKRKQKKEAFLQKFNPSLKLQKKKQQDDDESNDGLGMGGVLSSIDLLKDSMKLQPKTKGPKLTNEKRKKMSLKEANQYKNVLSHPSFKANPFATLQEHLANSVALQNQKIKQEQDFKPNNNNNNRNKLKRK</sequence>
<keyword id="KW-0539">Nucleus</keyword>
<keyword id="KW-1185">Reference proteome</keyword>
<keyword id="KW-0690">Ribosome biogenesis</keyword>
<reference key="1">
    <citation type="journal article" date="2005" name="Nature">
        <title>The genome of the social amoeba Dictyostelium discoideum.</title>
        <authorList>
            <person name="Eichinger L."/>
            <person name="Pachebat J.A."/>
            <person name="Gloeckner G."/>
            <person name="Rajandream M.A."/>
            <person name="Sucgang R."/>
            <person name="Berriman M."/>
            <person name="Song J."/>
            <person name="Olsen R."/>
            <person name="Szafranski K."/>
            <person name="Xu Q."/>
            <person name="Tunggal B."/>
            <person name="Kummerfeld S."/>
            <person name="Madera M."/>
            <person name="Konfortov B.A."/>
            <person name="Rivero F."/>
            <person name="Bankier A.T."/>
            <person name="Lehmann R."/>
            <person name="Hamlin N."/>
            <person name="Davies R."/>
            <person name="Gaudet P."/>
            <person name="Fey P."/>
            <person name="Pilcher K."/>
            <person name="Chen G."/>
            <person name="Saunders D."/>
            <person name="Sodergren E.J."/>
            <person name="Davis P."/>
            <person name="Kerhornou A."/>
            <person name="Nie X."/>
            <person name="Hall N."/>
            <person name="Anjard C."/>
            <person name="Hemphill L."/>
            <person name="Bason N."/>
            <person name="Farbrother P."/>
            <person name="Desany B."/>
            <person name="Just E."/>
            <person name="Morio T."/>
            <person name="Rost R."/>
            <person name="Churcher C.M."/>
            <person name="Cooper J."/>
            <person name="Haydock S."/>
            <person name="van Driessche N."/>
            <person name="Cronin A."/>
            <person name="Goodhead I."/>
            <person name="Muzny D.M."/>
            <person name="Mourier T."/>
            <person name="Pain A."/>
            <person name="Lu M."/>
            <person name="Harper D."/>
            <person name="Lindsay R."/>
            <person name="Hauser H."/>
            <person name="James K.D."/>
            <person name="Quiles M."/>
            <person name="Madan Babu M."/>
            <person name="Saito T."/>
            <person name="Buchrieser C."/>
            <person name="Wardroper A."/>
            <person name="Felder M."/>
            <person name="Thangavelu M."/>
            <person name="Johnson D."/>
            <person name="Knights A."/>
            <person name="Loulseged H."/>
            <person name="Mungall K.L."/>
            <person name="Oliver K."/>
            <person name="Price C."/>
            <person name="Quail M.A."/>
            <person name="Urushihara H."/>
            <person name="Hernandez J."/>
            <person name="Rabbinowitsch E."/>
            <person name="Steffen D."/>
            <person name="Sanders M."/>
            <person name="Ma J."/>
            <person name="Kohara Y."/>
            <person name="Sharp S."/>
            <person name="Simmonds M.N."/>
            <person name="Spiegler S."/>
            <person name="Tivey A."/>
            <person name="Sugano S."/>
            <person name="White B."/>
            <person name="Walker D."/>
            <person name="Woodward J.R."/>
            <person name="Winckler T."/>
            <person name="Tanaka Y."/>
            <person name="Shaulsky G."/>
            <person name="Schleicher M."/>
            <person name="Weinstock G.M."/>
            <person name="Rosenthal A."/>
            <person name="Cox E.C."/>
            <person name="Chisholm R.L."/>
            <person name="Gibbs R.A."/>
            <person name="Loomis W.F."/>
            <person name="Platzer M."/>
            <person name="Kay R.R."/>
            <person name="Williams J.G."/>
            <person name="Dear P.H."/>
            <person name="Noegel A.A."/>
            <person name="Barrell B.G."/>
            <person name="Kuspa A."/>
        </authorList>
    </citation>
    <scope>NUCLEOTIDE SEQUENCE [LARGE SCALE GENOMIC DNA]</scope>
    <source>
        <strain>AX4</strain>
    </source>
</reference>